<sequence>MAFATINSAPPTHTAAQISTQIPTIEDAFGAEPALKKRIYDAIGSTPQYISLFEDIARYTSSLRTRNANSVQPIQVVHDEPAAKKRKLENGIGQGTGGAQSLADLKTHKALQFYMQDVSFAMPQRKKLTLEITAGNKYLRARNQTSKEVEFGVPLDRVQQVLCLPVPEKTQRQFNFCIIPQYADGINSPPNGVPVPEAVMWTINDGPAKAAFSGHGQQIGNQDGETAEDLVRQVLNENLSHTQVIRPCAQEFASAMPEGHRKGEMAYHVKAFRGSKEGYLFFLSTGIFFGYKKPLLFFAFENIDSISYTSVLQRTFNLNIVARATGSDETQEFEFSMIDQADYSGIDTYIKTHGLQDASLAEARRAKRYNINGAKTEENGEAASQEAEESELQKAQRELEDQEDEEEEDYDPGSEGESEGSGSSSEENSDDDQDDDADGNLVAEELGSEAEDVPEDEL</sequence>
<accession>Q5B122</accession>
<accession>C8VFH9</accession>
<keyword id="KW-0143">Chaperone</keyword>
<keyword id="KW-0158">Chromosome</keyword>
<keyword id="KW-0238">DNA-binding</keyword>
<keyword id="KW-0539">Nucleus</keyword>
<keyword id="KW-1185">Reference proteome</keyword>
<keyword id="KW-0804">Transcription</keyword>
<keyword id="KW-0805">Transcription regulation</keyword>
<proteinExistence type="inferred from homology"/>
<name>RT106_EMENI</name>
<protein>
    <recommendedName>
        <fullName>Histone chaperone rtt106</fullName>
    </recommendedName>
</protein>
<organism>
    <name type="scientific">Emericella nidulans (strain FGSC A4 / ATCC 38163 / CBS 112.46 / NRRL 194 / M139)</name>
    <name type="common">Aspergillus nidulans</name>
    <dbReference type="NCBI Taxonomy" id="227321"/>
    <lineage>
        <taxon>Eukaryota</taxon>
        <taxon>Fungi</taxon>
        <taxon>Dikarya</taxon>
        <taxon>Ascomycota</taxon>
        <taxon>Pezizomycotina</taxon>
        <taxon>Eurotiomycetes</taxon>
        <taxon>Eurotiomycetidae</taxon>
        <taxon>Eurotiales</taxon>
        <taxon>Aspergillaceae</taxon>
        <taxon>Aspergillus</taxon>
        <taxon>Aspergillus subgen. Nidulantes</taxon>
    </lineage>
</organism>
<feature type="chain" id="PRO_0000320492" description="Histone chaperone rtt106">
    <location>
        <begin position="1"/>
        <end position="458"/>
    </location>
</feature>
<feature type="region of interest" description="Disordered" evidence="2">
    <location>
        <begin position="371"/>
        <end position="458"/>
    </location>
</feature>
<feature type="compositionally biased region" description="Acidic residues" evidence="2">
    <location>
        <begin position="400"/>
        <end position="418"/>
    </location>
</feature>
<feature type="compositionally biased region" description="Acidic residues" evidence="2">
    <location>
        <begin position="427"/>
        <end position="438"/>
    </location>
</feature>
<feature type="compositionally biased region" description="Acidic residues" evidence="2">
    <location>
        <begin position="446"/>
        <end position="458"/>
    </location>
</feature>
<gene>
    <name type="primary">rtt106</name>
    <name type="ORF">AN5758</name>
</gene>
<evidence type="ECO:0000250" key="1"/>
<evidence type="ECO:0000256" key="2">
    <source>
        <dbReference type="SAM" id="MobiDB-lite"/>
    </source>
</evidence>
<evidence type="ECO:0000305" key="3"/>
<dbReference type="EMBL" id="AACD01000098">
    <property type="protein sequence ID" value="EAA62851.1"/>
    <property type="status" value="ALT_SEQ"/>
    <property type="molecule type" value="Genomic_DNA"/>
</dbReference>
<dbReference type="EMBL" id="BN001305">
    <property type="protein sequence ID" value="CBF81261.1"/>
    <property type="status" value="ALT_SEQ"/>
    <property type="molecule type" value="Genomic_DNA"/>
</dbReference>
<dbReference type="RefSeq" id="XP_663362.1">
    <property type="nucleotide sequence ID" value="XM_658270.1"/>
</dbReference>
<dbReference type="SMR" id="Q5B122"/>
<dbReference type="FunCoup" id="Q5B122">
    <property type="interactions" value="112"/>
</dbReference>
<dbReference type="STRING" id="227321.Q5B122"/>
<dbReference type="KEGG" id="ani:ANIA_05758"/>
<dbReference type="VEuPathDB" id="FungiDB:AN5758"/>
<dbReference type="eggNOG" id="ENOG502R9PE">
    <property type="taxonomic scope" value="Eukaryota"/>
</dbReference>
<dbReference type="HOGENOM" id="CLU_033828_0_0_1"/>
<dbReference type="InParanoid" id="Q5B122"/>
<dbReference type="OrthoDB" id="75754at2759"/>
<dbReference type="Proteomes" id="UP000000560">
    <property type="component" value="Chromosome V"/>
</dbReference>
<dbReference type="GO" id="GO:0005694">
    <property type="term" value="C:chromosome"/>
    <property type="evidence" value="ECO:0007669"/>
    <property type="project" value="UniProtKB-SubCell"/>
</dbReference>
<dbReference type="GO" id="GO:0005634">
    <property type="term" value="C:nucleus"/>
    <property type="evidence" value="ECO:0007669"/>
    <property type="project" value="UniProtKB-SubCell"/>
</dbReference>
<dbReference type="GO" id="GO:0003677">
    <property type="term" value="F:DNA binding"/>
    <property type="evidence" value="ECO:0007669"/>
    <property type="project" value="UniProtKB-KW"/>
</dbReference>
<dbReference type="GO" id="GO:0042393">
    <property type="term" value="F:histone binding"/>
    <property type="evidence" value="ECO:0000318"/>
    <property type="project" value="GO_Central"/>
</dbReference>
<dbReference type="GO" id="GO:0031491">
    <property type="term" value="F:nucleosome binding"/>
    <property type="evidence" value="ECO:0000318"/>
    <property type="project" value="GO_Central"/>
</dbReference>
<dbReference type="Gene3D" id="2.30.29.120">
    <property type="match status" value="1"/>
</dbReference>
<dbReference type="Gene3D" id="2.30.29.30">
    <property type="entry name" value="Pleckstrin-homology domain (PH domain)/Phosphotyrosine-binding domain (PTB)"/>
    <property type="match status" value="1"/>
</dbReference>
<dbReference type="InterPro" id="IPR011993">
    <property type="entry name" value="PH-like_dom_sf"/>
</dbReference>
<dbReference type="InterPro" id="IPR013719">
    <property type="entry name" value="RTT106/SPT16-like_middle_dom"/>
</dbReference>
<dbReference type="InterPro" id="IPR050454">
    <property type="entry name" value="RTT106/SSRP1_HistChap/FACT"/>
</dbReference>
<dbReference type="PANTHER" id="PTHR45849">
    <property type="entry name" value="FACT COMPLEX SUBUNIT SSRP1"/>
    <property type="match status" value="1"/>
</dbReference>
<dbReference type="PANTHER" id="PTHR45849:SF3">
    <property type="entry name" value="HISTONE CHAPERONE RTT106"/>
    <property type="match status" value="1"/>
</dbReference>
<dbReference type="Pfam" id="PF08512">
    <property type="entry name" value="Rttp106-like_middle"/>
    <property type="match status" value="1"/>
</dbReference>
<dbReference type="SMART" id="SM01287">
    <property type="entry name" value="Rtt106"/>
    <property type="match status" value="1"/>
</dbReference>
<dbReference type="SUPFAM" id="SSF50729">
    <property type="entry name" value="PH domain-like"/>
    <property type="match status" value="1"/>
</dbReference>
<comment type="function">
    <text evidence="1">Histones H3 and H4 chaperone involved in the nucleosome formation and heterochromatin silencing. Required for the deposition of H3K56ac-carrying H3-H4 complex onto newly-replicated DNA. Plays a role in the transcriptional regulation of the cell-cycle dependent histone genes by creating a repressive structure at the core histone gene promoter (By similarity).</text>
</comment>
<comment type="subunit">
    <text evidence="1">Interacts with histones H3 and H4.</text>
</comment>
<comment type="subcellular location">
    <subcellularLocation>
        <location evidence="1">Nucleus</location>
    </subcellularLocation>
    <subcellularLocation>
        <location evidence="1">Chromosome</location>
    </subcellularLocation>
</comment>
<comment type="similarity">
    <text evidence="3">Belongs to the RTT106 family.</text>
</comment>
<comment type="sequence caution" evidence="3">
    <conflict type="erroneous gene model prediction">
        <sequence resource="EMBL-CDS" id="CBF81261"/>
    </conflict>
</comment>
<comment type="sequence caution" evidence="3">
    <conflict type="erroneous gene model prediction">
        <sequence resource="EMBL-CDS" id="EAA62851"/>
    </conflict>
</comment>
<reference key="1">
    <citation type="journal article" date="2005" name="Nature">
        <title>Sequencing of Aspergillus nidulans and comparative analysis with A. fumigatus and A. oryzae.</title>
        <authorList>
            <person name="Galagan J.E."/>
            <person name="Calvo S.E."/>
            <person name="Cuomo C."/>
            <person name="Ma L.-J."/>
            <person name="Wortman J.R."/>
            <person name="Batzoglou S."/>
            <person name="Lee S.-I."/>
            <person name="Bastuerkmen M."/>
            <person name="Spevak C.C."/>
            <person name="Clutterbuck J."/>
            <person name="Kapitonov V."/>
            <person name="Jurka J."/>
            <person name="Scazzocchio C."/>
            <person name="Farman M.L."/>
            <person name="Butler J."/>
            <person name="Purcell S."/>
            <person name="Harris S."/>
            <person name="Braus G.H."/>
            <person name="Draht O."/>
            <person name="Busch S."/>
            <person name="D'Enfert C."/>
            <person name="Bouchier C."/>
            <person name="Goldman G.H."/>
            <person name="Bell-Pedersen D."/>
            <person name="Griffiths-Jones S."/>
            <person name="Doonan J.H."/>
            <person name="Yu J."/>
            <person name="Vienken K."/>
            <person name="Pain A."/>
            <person name="Freitag M."/>
            <person name="Selker E.U."/>
            <person name="Archer D.B."/>
            <person name="Penalva M.A."/>
            <person name="Oakley B.R."/>
            <person name="Momany M."/>
            <person name="Tanaka T."/>
            <person name="Kumagai T."/>
            <person name="Asai K."/>
            <person name="Machida M."/>
            <person name="Nierman W.C."/>
            <person name="Denning D.W."/>
            <person name="Caddick M.X."/>
            <person name="Hynes M."/>
            <person name="Paoletti M."/>
            <person name="Fischer R."/>
            <person name="Miller B.L."/>
            <person name="Dyer P.S."/>
            <person name="Sachs M.S."/>
            <person name="Osmani S.A."/>
            <person name="Birren B.W."/>
        </authorList>
    </citation>
    <scope>NUCLEOTIDE SEQUENCE [LARGE SCALE GENOMIC DNA]</scope>
    <source>
        <strain>FGSC A4 / ATCC 38163 / CBS 112.46 / NRRL 194 / M139</strain>
    </source>
</reference>
<reference key="2">
    <citation type="journal article" date="2009" name="Fungal Genet. Biol.">
        <title>The 2008 update of the Aspergillus nidulans genome annotation: a community effort.</title>
        <authorList>
            <person name="Wortman J.R."/>
            <person name="Gilsenan J.M."/>
            <person name="Joardar V."/>
            <person name="Deegan J."/>
            <person name="Clutterbuck J."/>
            <person name="Andersen M.R."/>
            <person name="Archer D."/>
            <person name="Bencina M."/>
            <person name="Braus G."/>
            <person name="Coutinho P."/>
            <person name="von Dohren H."/>
            <person name="Doonan J."/>
            <person name="Driessen A.J."/>
            <person name="Durek P."/>
            <person name="Espeso E."/>
            <person name="Fekete E."/>
            <person name="Flipphi M."/>
            <person name="Estrada C.G."/>
            <person name="Geysens S."/>
            <person name="Goldman G."/>
            <person name="de Groot P.W."/>
            <person name="Hansen K."/>
            <person name="Harris S.D."/>
            <person name="Heinekamp T."/>
            <person name="Helmstaedt K."/>
            <person name="Henrissat B."/>
            <person name="Hofmann G."/>
            <person name="Homan T."/>
            <person name="Horio T."/>
            <person name="Horiuchi H."/>
            <person name="James S."/>
            <person name="Jones M."/>
            <person name="Karaffa L."/>
            <person name="Karanyi Z."/>
            <person name="Kato M."/>
            <person name="Keller N."/>
            <person name="Kelly D.E."/>
            <person name="Kiel J.A."/>
            <person name="Kim J.M."/>
            <person name="van der Klei I.J."/>
            <person name="Klis F.M."/>
            <person name="Kovalchuk A."/>
            <person name="Krasevec N."/>
            <person name="Kubicek C.P."/>
            <person name="Liu B."/>
            <person name="Maccabe A."/>
            <person name="Meyer V."/>
            <person name="Mirabito P."/>
            <person name="Miskei M."/>
            <person name="Mos M."/>
            <person name="Mullins J."/>
            <person name="Nelson D.R."/>
            <person name="Nielsen J."/>
            <person name="Oakley B.R."/>
            <person name="Osmani S.A."/>
            <person name="Pakula T."/>
            <person name="Paszewski A."/>
            <person name="Paulsen I."/>
            <person name="Pilsyk S."/>
            <person name="Pocsi I."/>
            <person name="Punt P.J."/>
            <person name="Ram A.F."/>
            <person name="Ren Q."/>
            <person name="Robellet X."/>
            <person name="Robson G."/>
            <person name="Seiboth B."/>
            <person name="van Solingen P."/>
            <person name="Specht T."/>
            <person name="Sun J."/>
            <person name="Taheri-Talesh N."/>
            <person name="Takeshita N."/>
            <person name="Ussery D."/>
            <person name="vanKuyk P.A."/>
            <person name="Visser H."/>
            <person name="van de Vondervoort P.J."/>
            <person name="de Vries R.P."/>
            <person name="Walton J."/>
            <person name="Xiang X."/>
            <person name="Xiong Y."/>
            <person name="Zeng A.P."/>
            <person name="Brandt B.W."/>
            <person name="Cornell M.J."/>
            <person name="van den Hondel C.A."/>
            <person name="Visser J."/>
            <person name="Oliver S.G."/>
            <person name="Turner G."/>
        </authorList>
    </citation>
    <scope>GENOME REANNOTATION</scope>
    <source>
        <strain>FGSC A4 / ATCC 38163 / CBS 112.46 / NRRL 194 / M139</strain>
    </source>
</reference>